<keyword id="KW-0240">DNA-directed RNA polymerase</keyword>
<keyword id="KW-0539">Nucleus</keyword>
<keyword id="KW-0804">Transcription</keyword>
<protein>
    <recommendedName>
        <fullName>DNA-directed RNA polymerases I, II, and III subunit RPABC1</fullName>
        <shortName>RNA polymerases I, II, and III subunit ABC1</shortName>
    </recommendedName>
</protein>
<evidence type="ECO:0000250" key="1"/>
<evidence type="ECO:0000305" key="2"/>
<dbReference type="EMBL" id="AF225206">
    <property type="protein sequence ID" value="AAF91238.1"/>
    <property type="molecule type" value="Genomic_DNA"/>
</dbReference>
<dbReference type="SMR" id="Q9P4B9"/>
<dbReference type="VEuPathDB" id="FungiDB:KLMA_40224"/>
<dbReference type="OrthoDB" id="22975at4893"/>
<dbReference type="GO" id="GO:0005736">
    <property type="term" value="C:RNA polymerase I complex"/>
    <property type="evidence" value="ECO:0007669"/>
    <property type="project" value="TreeGrafter"/>
</dbReference>
<dbReference type="GO" id="GO:0005665">
    <property type="term" value="C:RNA polymerase II, core complex"/>
    <property type="evidence" value="ECO:0007669"/>
    <property type="project" value="TreeGrafter"/>
</dbReference>
<dbReference type="GO" id="GO:0005666">
    <property type="term" value="C:RNA polymerase III complex"/>
    <property type="evidence" value="ECO:0007669"/>
    <property type="project" value="TreeGrafter"/>
</dbReference>
<dbReference type="GO" id="GO:0003677">
    <property type="term" value="F:DNA binding"/>
    <property type="evidence" value="ECO:0007669"/>
    <property type="project" value="InterPro"/>
</dbReference>
<dbReference type="GO" id="GO:0003899">
    <property type="term" value="F:DNA-directed RNA polymerase activity"/>
    <property type="evidence" value="ECO:0007669"/>
    <property type="project" value="InterPro"/>
</dbReference>
<dbReference type="GO" id="GO:0006366">
    <property type="term" value="P:transcription by RNA polymerase II"/>
    <property type="evidence" value="ECO:0007669"/>
    <property type="project" value="TreeGrafter"/>
</dbReference>
<dbReference type="GO" id="GO:0006362">
    <property type="term" value="P:transcription elongation by RNA polymerase I"/>
    <property type="evidence" value="ECO:0007669"/>
    <property type="project" value="TreeGrafter"/>
</dbReference>
<dbReference type="GO" id="GO:0042797">
    <property type="term" value="P:tRNA transcription by RNA polymerase III"/>
    <property type="evidence" value="ECO:0007669"/>
    <property type="project" value="TreeGrafter"/>
</dbReference>
<dbReference type="FunFam" id="3.40.1340.10:FF:000002">
    <property type="entry name" value="DNA-directed RNA polymerases I, II, and III subunit RPABC1"/>
    <property type="match status" value="1"/>
</dbReference>
<dbReference type="FunFam" id="3.90.940.20:FF:000001">
    <property type="entry name" value="DNA-directed RNA polymerases I, II, and III subunit RPABC1"/>
    <property type="match status" value="1"/>
</dbReference>
<dbReference type="Gene3D" id="3.40.1340.10">
    <property type="entry name" value="RNA polymerase, Rpb5, N-terminal domain"/>
    <property type="match status" value="1"/>
</dbReference>
<dbReference type="Gene3D" id="3.90.940.20">
    <property type="entry name" value="RPB5-like RNA polymerase subunit"/>
    <property type="match status" value="1"/>
</dbReference>
<dbReference type="HAMAP" id="MF_00025">
    <property type="entry name" value="RNApol_Rpo5_RPB5"/>
    <property type="match status" value="1"/>
</dbReference>
<dbReference type="InterPro" id="IPR014381">
    <property type="entry name" value="Arch_Rpo5/euc_Rpb5"/>
</dbReference>
<dbReference type="InterPro" id="IPR005571">
    <property type="entry name" value="RNA_pol_Rpb5_N"/>
</dbReference>
<dbReference type="InterPro" id="IPR036710">
    <property type="entry name" value="RNA_pol_Rpb5_N_sf"/>
</dbReference>
<dbReference type="InterPro" id="IPR000783">
    <property type="entry name" value="RNA_pol_subH/Rpb5_C"/>
</dbReference>
<dbReference type="InterPro" id="IPR020608">
    <property type="entry name" value="RNA_pol_subH/Rpb5_CS"/>
</dbReference>
<dbReference type="InterPro" id="IPR035913">
    <property type="entry name" value="RPB5-like_sf"/>
</dbReference>
<dbReference type="NCBIfam" id="NF007129">
    <property type="entry name" value="PRK09570.1"/>
    <property type="match status" value="1"/>
</dbReference>
<dbReference type="PANTHER" id="PTHR10535">
    <property type="entry name" value="DNA-DIRECTED RNA POLYMERASES I, II, AND III SUBUNIT RPABC1"/>
    <property type="match status" value="1"/>
</dbReference>
<dbReference type="PANTHER" id="PTHR10535:SF0">
    <property type="entry name" value="DNA-DIRECTED RNA POLYMERASES I, II, AND III SUBUNIT RPABC1"/>
    <property type="match status" value="1"/>
</dbReference>
<dbReference type="Pfam" id="PF01191">
    <property type="entry name" value="RNA_pol_Rpb5_C"/>
    <property type="match status" value="1"/>
</dbReference>
<dbReference type="Pfam" id="PF03871">
    <property type="entry name" value="RNA_pol_Rpb5_N"/>
    <property type="match status" value="1"/>
</dbReference>
<dbReference type="PIRSF" id="PIRSF000747">
    <property type="entry name" value="RPB5"/>
    <property type="match status" value="1"/>
</dbReference>
<dbReference type="SUPFAM" id="SSF53036">
    <property type="entry name" value="Eukaryotic RPB5 N-terminal domain"/>
    <property type="match status" value="1"/>
</dbReference>
<dbReference type="SUPFAM" id="SSF55287">
    <property type="entry name" value="RPB5-like RNA polymerase subunit"/>
    <property type="match status" value="1"/>
</dbReference>
<dbReference type="PROSITE" id="PS01110">
    <property type="entry name" value="RNA_POL_H_23KD"/>
    <property type="match status" value="1"/>
</dbReference>
<sequence>MDQEQERGISRLWRAFRTVKEMVRDRGYFITQEEIDLSLEDFKVKYCDSMGKPQRKMMSFQSNPTEESIEKFPEMGSLWVEFCDEASVGVKTMKNFVVHITEKNFQTGIFIYQSGITPSANKILPTAAPAVIETFPEASLVVNITHHELVPKHIRLSDAEKKELLKRYRLKESQLPRIQRMDPVALYLGLKRGEVIKIIRKSETSGRYASYRICL</sequence>
<gene>
    <name type="primary">RPB5</name>
</gene>
<accession>Q9P4B9</accession>
<proteinExistence type="inferred from homology"/>
<feature type="chain" id="PRO_0000146083" description="DNA-directed RNA polymerases I, II, and III subunit RPABC1">
    <location>
        <begin position="1"/>
        <end position="215"/>
    </location>
</feature>
<reference key="1">
    <citation type="journal article" date="2000" name="Gene">
        <title>Kluyveromyces marxianus exhibits an ancestral Saccharomyces cerevisiae genome organization downstream of ADH2.</title>
        <authorList>
            <person name="Ladriere J.-M."/>
            <person name="Georis I."/>
            <person name="Guerineau M."/>
            <person name="Vandenhaute J."/>
        </authorList>
    </citation>
    <scope>NUCLEOTIDE SEQUENCE [GENOMIC DNA]</scope>
    <source>
        <strain>ATCC 12424 / NRRL Y-610</strain>
    </source>
</reference>
<comment type="function">
    <text evidence="1">DNA-dependent RNA polymerase catalyzes the transcription of DNA into RNA using the four ribonucleoside triphosphates as substrates. Common component of RNA polymerases I, II and III which synthesize ribosomal RNA precursors, mRNA precursors and many functional non-coding RNAs, and small RNAs, such as 5S rRNA and tRNAs, respectively. Pol II is the central component of the basal RNA polymerase II transcription machinery. Pols are composed of mobile elements that move relative to each other. In Pol II, RPB5 is part of the lower jaw surrounding the central large cleft and thought to grab the incoming DNA template. Seems to be the major component in this process (By similarity).</text>
</comment>
<comment type="subunit">
    <text evidence="1">Component of the RNA polymerase I (Pol I), RNA polymerase II (Pol II) and RNA polymerase III (Pol III) complexes consisting of at least 14, 12 and 17 subunits, respectively.</text>
</comment>
<comment type="subcellular location">
    <subcellularLocation>
        <location>Nucleus</location>
    </subcellularLocation>
</comment>
<comment type="similarity">
    <text evidence="2">Belongs to the archaeal Rpo5/eukaryotic RPB5 RNA polymerase subunit family.</text>
</comment>
<name>RPAB1_KLUMA</name>
<organism>
    <name type="scientific">Kluyveromyces marxianus</name>
    <name type="common">Yeast</name>
    <name type="synonym">Candida kefyr</name>
    <dbReference type="NCBI Taxonomy" id="4911"/>
    <lineage>
        <taxon>Eukaryota</taxon>
        <taxon>Fungi</taxon>
        <taxon>Dikarya</taxon>
        <taxon>Ascomycota</taxon>
        <taxon>Saccharomycotina</taxon>
        <taxon>Saccharomycetes</taxon>
        <taxon>Saccharomycetales</taxon>
        <taxon>Saccharomycetaceae</taxon>
        <taxon>Kluyveromyces</taxon>
    </lineage>
</organism>